<dbReference type="EMBL" id="AB294577">
    <property type="protein sequence ID" value="BAF94224.1"/>
    <property type="molecule type" value="Genomic_DNA"/>
</dbReference>
<dbReference type="EMBL" id="AB294578">
    <property type="protein sequence ID" value="BAF94244.1"/>
    <property type="molecule type" value="Genomic_DNA"/>
</dbReference>
<dbReference type="RefSeq" id="NP_001104233.2">
    <property type="nucleotide sequence ID" value="NM_001110763.2"/>
</dbReference>
<dbReference type="SMR" id="A9CMA6"/>
<dbReference type="FunCoup" id="A9CMA6">
    <property type="interactions" value="671"/>
</dbReference>
<dbReference type="STRING" id="10116.ENSRNOP00000005006"/>
<dbReference type="iPTMnet" id="A9CMA6"/>
<dbReference type="PhosphoSitePlus" id="A9CMA6"/>
<dbReference type="PaxDb" id="10116-ENSRNOP00000005006"/>
<dbReference type="Ensembl" id="ENSRNOT00000005006.5">
    <property type="protein sequence ID" value="ENSRNOP00000005006.4"/>
    <property type="gene ID" value="ENSRNOG00000003769.5"/>
</dbReference>
<dbReference type="GeneID" id="360839"/>
<dbReference type="KEGG" id="rno:360839"/>
<dbReference type="UCSC" id="RGD:1306212">
    <property type="organism name" value="rat"/>
</dbReference>
<dbReference type="AGR" id="RGD:1306212"/>
<dbReference type="CTD" id="81615"/>
<dbReference type="RGD" id="1306212">
    <property type="gene designation" value="Tmem163"/>
</dbReference>
<dbReference type="eggNOG" id="ENOG502QW7B">
    <property type="taxonomic scope" value="Eukaryota"/>
</dbReference>
<dbReference type="GeneTree" id="ENSGT00390000001170"/>
<dbReference type="HOGENOM" id="CLU_081161_0_0_1"/>
<dbReference type="InParanoid" id="A9CMA6"/>
<dbReference type="OMA" id="WPATVRN"/>
<dbReference type="OrthoDB" id="5980560at2759"/>
<dbReference type="PhylomeDB" id="A9CMA6"/>
<dbReference type="TreeFam" id="TF330782"/>
<dbReference type="PRO" id="PR:A9CMA6"/>
<dbReference type="Proteomes" id="UP000002494">
    <property type="component" value="Chromosome 13"/>
</dbReference>
<dbReference type="Bgee" id="ENSRNOG00000003769">
    <property type="expression patterns" value="Expressed in cerebellum and 12 other cell types or tissues"/>
</dbReference>
<dbReference type="GO" id="GO:0031901">
    <property type="term" value="C:early endosome membrane"/>
    <property type="evidence" value="ECO:0000314"/>
    <property type="project" value="UniProtKB"/>
</dbReference>
<dbReference type="GO" id="GO:0097708">
    <property type="term" value="C:intracellular vesicle"/>
    <property type="evidence" value="ECO:0000266"/>
    <property type="project" value="RGD"/>
</dbReference>
<dbReference type="GO" id="GO:0031902">
    <property type="term" value="C:late endosome membrane"/>
    <property type="evidence" value="ECO:0007669"/>
    <property type="project" value="UniProtKB-SubCell"/>
</dbReference>
<dbReference type="GO" id="GO:0005765">
    <property type="term" value="C:lysosomal membrane"/>
    <property type="evidence" value="ECO:0007669"/>
    <property type="project" value="UniProtKB-SubCell"/>
</dbReference>
<dbReference type="GO" id="GO:0005886">
    <property type="term" value="C:plasma membrane"/>
    <property type="evidence" value="ECO:0000266"/>
    <property type="project" value="RGD"/>
</dbReference>
<dbReference type="GO" id="GO:0030672">
    <property type="term" value="C:synaptic vesicle membrane"/>
    <property type="evidence" value="ECO:0000314"/>
    <property type="project" value="UniProtKB"/>
</dbReference>
<dbReference type="GO" id="GO:0008270">
    <property type="term" value="F:zinc ion binding"/>
    <property type="evidence" value="ECO:0000314"/>
    <property type="project" value="UniProtKB"/>
</dbReference>
<dbReference type="GO" id="GO:0042552">
    <property type="term" value="P:myelination"/>
    <property type="evidence" value="ECO:0000250"/>
    <property type="project" value="UniProtKB"/>
</dbReference>
<dbReference type="GO" id="GO:0140882">
    <property type="term" value="P:zinc export across plasma membrane"/>
    <property type="evidence" value="ECO:0000250"/>
    <property type="project" value="UniProtKB"/>
</dbReference>
<dbReference type="GO" id="GO:0099180">
    <property type="term" value="P:zinc ion import into synaptic vesicle"/>
    <property type="evidence" value="ECO:0000314"/>
    <property type="project" value="SynGO"/>
</dbReference>
<dbReference type="FunFam" id="1.20.1510.10:FF:000018">
    <property type="entry name" value="transmembrane protein 163"/>
    <property type="match status" value="1"/>
</dbReference>
<dbReference type="Gene3D" id="1.20.1510.10">
    <property type="entry name" value="Cation efflux protein transmembrane domain"/>
    <property type="match status" value="1"/>
</dbReference>
<dbReference type="InterPro" id="IPR027469">
    <property type="entry name" value="Cation_efflux_TMD_sf"/>
</dbReference>
<dbReference type="InterPro" id="IPR026765">
    <property type="entry name" value="Tmem163"/>
</dbReference>
<dbReference type="PANTHER" id="PTHR31937">
    <property type="entry name" value="TRANSMEMBRANE PROTEIN 163"/>
    <property type="match status" value="1"/>
</dbReference>
<dbReference type="PANTHER" id="PTHR31937:SF2">
    <property type="entry name" value="TRANSMEMBRANE PROTEIN 163"/>
    <property type="match status" value="1"/>
</dbReference>
<dbReference type="SUPFAM" id="SSF161111">
    <property type="entry name" value="Cation efflux protein transmembrane domain-like"/>
    <property type="match status" value="1"/>
</dbReference>
<reference key="1">
    <citation type="journal article" date="2008" name="Mamm. Genome">
        <title>Actin-related protein 3 (Arp3) is mutated in proteinuric BUF/Mna rats.</title>
        <authorList>
            <person name="Akiyama K."/>
            <person name="Morita H."/>
            <person name="Suetsugu S."/>
            <person name="Kuraba S."/>
            <person name="Numata Y."/>
            <person name="Yamamoto Y."/>
            <person name="Inui K."/>
            <person name="Ideura T."/>
            <person name="Wakisaka N."/>
            <person name="Nakano K."/>
            <person name="Oniki H."/>
            <person name="Takenawa T."/>
            <person name="Matsuyama M."/>
            <person name="Yoshimura A."/>
        </authorList>
    </citation>
    <scope>NUCLEOTIDE SEQUENCE [GENOMIC DNA]</scope>
    <source>
        <strain>Buffalo/Mna</strain>
        <strain>Wistar Kyoto/Ncrj</strain>
    </source>
</reference>
<reference key="2">
    <citation type="journal article" date="2007" name="J. Neurochem.">
        <title>Identification and characterization of SV31, a novel synaptic vesicle membrane protein and potential transporter.</title>
        <authorList>
            <person name="Burre J."/>
            <person name="Zimmermann H."/>
            <person name="Volknandt W."/>
        </authorList>
    </citation>
    <scope>SUBCELLULAR LOCATION</scope>
    <scope>TOPOLOGY</scope>
    <scope>TISSUE SPECIFICITY</scope>
</reference>
<reference key="3">
    <citation type="journal article" date="2010" name="J. Neurosci.">
        <title>Quantitative comparison of glutamatergic and GABAergic synaptic vesicles unveils selectivity for few proteins including MAL2, a novel synaptic vesicle protein.</title>
        <authorList>
            <person name="Groenborg M."/>
            <person name="Pavlos N.J."/>
            <person name="Brunk I."/>
            <person name="Chua J.J."/>
            <person name="Muenster-Wandowski A."/>
            <person name="Riedel D."/>
            <person name="Ahnert-Hilger G."/>
            <person name="Urlaub H."/>
            <person name="Jahn R."/>
        </authorList>
    </citation>
    <scope>TISSUE SPECIFICITY</scope>
</reference>
<reference key="4">
    <citation type="journal article" date="2011" name="J. Neurochem.">
        <title>SV31 is a Zn2+-binding synaptic vesicle protein.</title>
        <authorList>
            <person name="Barth J."/>
            <person name="Zimmermann H."/>
            <person name="Volknandt W."/>
        </authorList>
    </citation>
    <scope>FUNCTION IN ZINC-BINDING</scope>
    <scope>SUBCELLULAR LOCATION</scope>
</reference>
<reference key="5">
    <citation type="journal article" date="2012" name="Nat. Commun.">
        <title>Quantitative maps of protein phosphorylation sites across 14 different rat organs and tissues.</title>
        <authorList>
            <person name="Lundby A."/>
            <person name="Secher A."/>
            <person name="Lage K."/>
            <person name="Nordsborg N.B."/>
            <person name="Dmytriyev A."/>
            <person name="Lundby C."/>
            <person name="Olsen J.V."/>
        </authorList>
    </citation>
    <scope>PHOSPHORYLATION [LARGE SCALE ANALYSIS] AT SER-11 AND SER-60</scope>
    <scope>IDENTIFICATION BY MASS SPECTROMETRY [LARGE SCALE ANALYSIS]</scope>
</reference>
<feature type="chain" id="PRO_0000416586" description="Transmembrane protein 163">
    <location>
        <begin position="1"/>
        <end position="288"/>
    </location>
</feature>
<feature type="topological domain" description="Cytoplasmic" evidence="4">
    <location>
        <begin position="1"/>
        <end position="87"/>
    </location>
</feature>
<feature type="transmembrane region" description="Helical" evidence="4">
    <location>
        <begin position="88"/>
        <end position="108"/>
    </location>
</feature>
<feature type="topological domain" description="Extracellular" evidence="4">
    <location>
        <begin position="109"/>
        <end position="115"/>
    </location>
</feature>
<feature type="transmembrane region" description="Helical" evidence="4">
    <location>
        <begin position="116"/>
        <end position="136"/>
    </location>
</feature>
<feature type="topological domain" description="Cytoplasmic" evidence="4">
    <location>
        <begin position="137"/>
        <end position="149"/>
    </location>
</feature>
<feature type="transmembrane region" description="Helical" evidence="4">
    <location>
        <begin position="150"/>
        <end position="170"/>
    </location>
</feature>
<feature type="topological domain" description="Extracellular" evidence="4">
    <location>
        <begin position="171"/>
        <end position="186"/>
    </location>
</feature>
<feature type="transmembrane region" description="Helical" evidence="4">
    <location>
        <begin position="187"/>
        <end position="207"/>
    </location>
</feature>
<feature type="topological domain" description="Cytoplasmic" evidence="4">
    <location>
        <begin position="208"/>
        <end position="216"/>
    </location>
</feature>
<feature type="transmembrane region" description="Helical" evidence="4">
    <location>
        <begin position="217"/>
        <end position="237"/>
    </location>
</feature>
<feature type="topological domain" description="Extracellular" evidence="4">
    <location>
        <begin position="238"/>
        <end position="254"/>
    </location>
</feature>
<feature type="transmembrane region" description="Helical" evidence="4">
    <location>
        <begin position="255"/>
        <end position="275"/>
    </location>
</feature>
<feature type="topological domain" description="Cytoplasmic" evidence="4">
    <location>
        <begin position="276"/>
        <end position="288"/>
    </location>
</feature>
<feature type="region of interest" description="Disordered" evidence="5">
    <location>
        <begin position="1"/>
        <end position="64"/>
    </location>
</feature>
<feature type="region of interest" description="Required for interaction with MCOLN1" evidence="3">
    <location>
        <begin position="41"/>
        <end position="71"/>
    </location>
</feature>
<feature type="compositionally biased region" description="Basic and acidic residues" evidence="5">
    <location>
        <begin position="1"/>
        <end position="11"/>
    </location>
</feature>
<feature type="compositionally biased region" description="Pro residues" evidence="5">
    <location>
        <begin position="12"/>
        <end position="24"/>
    </location>
</feature>
<feature type="compositionally biased region" description="Low complexity" evidence="5">
    <location>
        <begin position="25"/>
        <end position="42"/>
    </location>
</feature>
<feature type="modified residue" description="Phosphoserine" evidence="10">
    <location>
        <position position="11"/>
    </location>
</feature>
<feature type="modified residue" description="Phosphoserine" evidence="2">
    <location>
        <position position="54"/>
    </location>
</feature>
<feature type="modified residue" description="Phosphoserine" evidence="2">
    <location>
        <position position="56"/>
    </location>
</feature>
<feature type="modified residue" description="Phosphoserine" evidence="10">
    <location>
        <position position="60"/>
    </location>
</feature>
<accession>A9CMA6</accession>
<sequence>MERAPGSERRSPPGPGVPRPPPRGHAPSTAAPAPNPAPLSSSMQPDEERQPRISESGQFSDGFEDRGLLESSTRLKPHEAQNYRKKALWVSWLSIIVTLALAVAAFTVSVMRYSASAFGFAFDAILDVLSSAIVLWRYSNAAAVHSAHREYIACVILGVIFLLSSICIVVKAIHDLSTRLLPEVDDFLFSVSILSGILCSVLAVLKFMLGKVLTSRALITDGFNSLVGGVMGFSILLSAEVFKHNAAVWYLDGSIGVLIGLTIFAYGVKLLIDMVPRVRQTRHYEMFE</sequence>
<evidence type="ECO:0000250" key="1">
    <source>
        <dbReference type="UniProtKB" id="B0UY98"/>
    </source>
</evidence>
<evidence type="ECO:0000250" key="2">
    <source>
        <dbReference type="UniProtKB" id="Q8C996"/>
    </source>
</evidence>
<evidence type="ECO:0000250" key="3">
    <source>
        <dbReference type="UniProtKB" id="Q8TC26"/>
    </source>
</evidence>
<evidence type="ECO:0000255" key="4"/>
<evidence type="ECO:0000256" key="5">
    <source>
        <dbReference type="SAM" id="MobiDB-lite"/>
    </source>
</evidence>
<evidence type="ECO:0000269" key="6">
    <source>
    </source>
</evidence>
<evidence type="ECO:0000269" key="7">
    <source>
    </source>
</evidence>
<evidence type="ECO:0000269" key="8">
    <source>
    </source>
</evidence>
<evidence type="ECO:0000305" key="9"/>
<evidence type="ECO:0007744" key="10">
    <source>
    </source>
</evidence>
<keyword id="KW-1003">Cell membrane</keyword>
<keyword id="KW-0968">Cytoplasmic vesicle</keyword>
<keyword id="KW-0967">Endosome</keyword>
<keyword id="KW-0458">Lysosome</keyword>
<keyword id="KW-0472">Membrane</keyword>
<keyword id="KW-0597">Phosphoprotein</keyword>
<keyword id="KW-1185">Reference proteome</keyword>
<keyword id="KW-0770">Synapse</keyword>
<keyword id="KW-0812">Transmembrane</keyword>
<keyword id="KW-1133">Transmembrane helix</keyword>
<keyword id="KW-0813">Transport</keyword>
<keyword id="KW-0862">Zinc</keyword>
<organism>
    <name type="scientific">Rattus norvegicus</name>
    <name type="common">Rat</name>
    <dbReference type="NCBI Taxonomy" id="10116"/>
    <lineage>
        <taxon>Eukaryota</taxon>
        <taxon>Metazoa</taxon>
        <taxon>Chordata</taxon>
        <taxon>Craniata</taxon>
        <taxon>Vertebrata</taxon>
        <taxon>Euteleostomi</taxon>
        <taxon>Mammalia</taxon>
        <taxon>Eutheria</taxon>
        <taxon>Euarchontoglires</taxon>
        <taxon>Glires</taxon>
        <taxon>Rodentia</taxon>
        <taxon>Myomorpha</taxon>
        <taxon>Muroidea</taxon>
        <taxon>Muridae</taxon>
        <taxon>Murinae</taxon>
        <taxon>Rattus</taxon>
    </lineage>
</organism>
<name>TM163_RAT</name>
<gene>
    <name type="primary">Tmem163</name>
    <name type="synonym">Sv31</name>
</gene>
<comment type="function">
    <text evidence="1 3 8">Zinc ion transporter that mediates zinc efflux and plays a crucial role in intracellular zinc homeostasis (By similarity). Binds the divalent cations Zn(2+), Ni(2+), and to a minor extent Cu(2+) (PubMed:21668449). Is a functional modulator of P2X purinoceptors, including P2RX1, P2RX3, P2RX4 and P2RX7 (By similarity). Plays a role in central nervous system development and is required for myelination, and survival and proliferation of oligodendrocytes (By similarity).</text>
</comment>
<comment type="catalytic activity">
    <reaction evidence="3">
        <text>Zn(2+)(in) = Zn(2+)(out)</text>
        <dbReference type="Rhea" id="RHEA:29351"/>
        <dbReference type="ChEBI" id="CHEBI:29105"/>
    </reaction>
    <physiologicalReaction direction="left-to-right" evidence="3">
        <dbReference type="Rhea" id="RHEA:29352"/>
    </physiologicalReaction>
</comment>
<comment type="subunit">
    <text evidence="2 3">Homodimer (By similarity). Interacts with MCOLN1 (By similarity). Interacts with SLC30A1, SLC30A2, SLC30A3 and SLC30A4 (By similarity).</text>
</comment>
<comment type="subcellular location">
    <subcellularLocation>
        <location evidence="6">Cytoplasmic vesicle</location>
        <location evidence="6">Secretory vesicle</location>
        <location evidence="6">Synaptic vesicle membrane</location>
        <topology evidence="4">Multi-pass membrane protein</topology>
    </subcellularLocation>
    <subcellularLocation>
        <location evidence="8">Early endosome membrane</location>
        <topology evidence="4">Multi-pass membrane protein</topology>
    </subcellularLocation>
    <subcellularLocation>
        <location evidence="3">Late endosome membrane</location>
        <topology evidence="4">Multi-pass membrane protein</topology>
    </subcellularLocation>
    <subcellularLocation>
        <location evidence="3">Lysosome membrane</location>
        <topology evidence="4">Multi-pass membrane protein</topology>
    </subcellularLocation>
    <subcellularLocation>
        <location evidence="3">Cell membrane</location>
        <topology evidence="4">Multi-pass membrane protein</topology>
    </subcellularLocation>
    <text evidence="6">Glutamatergic synaptic vesicles.</text>
</comment>
<comment type="tissue specificity">
    <text evidence="6 7">Strongly expressed in brain. Also detected in lung, liver, kidney and spleen. Mainly expressed in the glutaminergic neuron subpopulations.</text>
</comment>
<comment type="similarity">
    <text evidence="9">Belongs to the TMEM163 family.</text>
</comment>
<protein>
    <recommendedName>
        <fullName>Transmembrane protein 163</fullName>
    </recommendedName>
    <alternativeName>
        <fullName>Synaptic vesicle membrane protein of 31 kDa</fullName>
    </alternativeName>
</protein>
<proteinExistence type="evidence at protein level"/>